<protein>
    <recommendedName>
        <fullName evidence="1">ATP synthase subunit b, chloroplastic</fullName>
    </recommendedName>
    <alternativeName>
        <fullName evidence="1">ATP synthase F(0) sector subunit b</fullName>
    </alternativeName>
    <alternativeName>
        <fullName evidence="1">ATPase subunit I</fullName>
    </alternativeName>
</protein>
<comment type="function">
    <text evidence="1">F(1)F(0) ATP synthase produces ATP from ADP in the presence of a proton or sodium gradient. F-type ATPases consist of two structural domains, F(1) containing the extramembraneous catalytic core and F(0) containing the membrane proton channel, linked together by a central stalk and a peripheral stalk. During catalysis, ATP synthesis in the catalytic domain of F(1) is coupled via a rotary mechanism of the central stalk subunits to proton translocation.</text>
</comment>
<comment type="function">
    <text evidence="1">Component of the F(0) channel, it forms part of the peripheral stalk, linking F(1) to F(0).</text>
</comment>
<comment type="subunit">
    <text evidence="1">F-type ATPases have 2 components, F(1) - the catalytic core - and F(0) - the membrane proton channel. F(1) has five subunits: alpha(3), beta(3), gamma(1), delta(1), epsilon(1). F(0) has four main subunits: a(1), b(1), b'(1) and c(10-14). The alpha and beta chains form an alternating ring which encloses part of the gamma chain. F(1) is attached to F(0) by a central stalk formed by the gamma and epsilon chains, while a peripheral stalk is formed by the delta, b and b' chains.</text>
</comment>
<comment type="subcellular location">
    <subcellularLocation>
        <location evidence="1">Plastid</location>
        <location evidence="1">Chloroplast thylakoid membrane</location>
        <topology evidence="1">Single-pass membrane protein</topology>
    </subcellularLocation>
</comment>
<comment type="miscellaneous">
    <text>In plastids the F-type ATPase is also known as CF(1)CF(0).</text>
</comment>
<comment type="similarity">
    <text evidence="1">Belongs to the ATPase B chain family.</text>
</comment>
<geneLocation type="chloroplast"/>
<evidence type="ECO:0000255" key="1">
    <source>
        <dbReference type="HAMAP-Rule" id="MF_01398"/>
    </source>
</evidence>
<reference key="1">
    <citation type="journal article" date="2007" name="BMC Genomics">
        <title>Rapid evolutionary change of common bean (Phaseolus vulgaris L) plastome, and the genomic diversification of legume chloroplasts.</title>
        <authorList>
            <person name="Guo X."/>
            <person name="Castillo-Ramirez S."/>
            <person name="Gonzalez V."/>
            <person name="Bustos P."/>
            <person name="Fernandez-Vazquez J.L."/>
            <person name="Santamaria R.I."/>
            <person name="Arellano J."/>
            <person name="Cevallos M.A."/>
            <person name="Davila G."/>
        </authorList>
    </citation>
    <scope>NUCLEOTIDE SEQUENCE [LARGE SCALE GENOMIC DNA]</scope>
    <source>
        <strain>cv. Negro Jamapa</strain>
    </source>
</reference>
<reference key="2">
    <citation type="submission" date="2007-10" db="EMBL/GenBank/DDBJ databases">
        <title>Complete nucleotide sequence of the plastid genome of the common bean, Phaseolus vulgaris.</title>
        <authorList>
            <person name="Moore M.J."/>
            <person name="Triplett E.W."/>
            <person name="Broughton W.J."/>
            <person name="Soltis P.S."/>
            <person name="Soltis D.E."/>
        </authorList>
    </citation>
    <scope>NUCLEOTIDE SEQUENCE [LARGE SCALE GENOMIC DNA]</scope>
</reference>
<dbReference type="EMBL" id="DQ886273">
    <property type="protein sequence ID" value="ABH88092.1"/>
    <property type="molecule type" value="Genomic_DNA"/>
</dbReference>
<dbReference type="EMBL" id="EU196765">
    <property type="protein sequence ID" value="ABW22776.1"/>
    <property type="molecule type" value="Genomic_DNA"/>
</dbReference>
<dbReference type="RefSeq" id="YP_001122812.1">
    <property type="nucleotide sequence ID" value="NC_009259.1"/>
</dbReference>
<dbReference type="SMR" id="A4GGB1"/>
<dbReference type="GeneID" id="4961760"/>
<dbReference type="KEGG" id="pvu:4961760"/>
<dbReference type="GO" id="GO:0009535">
    <property type="term" value="C:chloroplast thylakoid membrane"/>
    <property type="evidence" value="ECO:0007669"/>
    <property type="project" value="UniProtKB-SubCell"/>
</dbReference>
<dbReference type="GO" id="GO:0045259">
    <property type="term" value="C:proton-transporting ATP synthase complex"/>
    <property type="evidence" value="ECO:0007669"/>
    <property type="project" value="UniProtKB-KW"/>
</dbReference>
<dbReference type="GO" id="GO:0046933">
    <property type="term" value="F:proton-transporting ATP synthase activity, rotational mechanism"/>
    <property type="evidence" value="ECO:0007669"/>
    <property type="project" value="UniProtKB-UniRule"/>
</dbReference>
<dbReference type="CDD" id="cd06503">
    <property type="entry name" value="ATP-synt_Fo_b"/>
    <property type="match status" value="1"/>
</dbReference>
<dbReference type="HAMAP" id="MF_01398">
    <property type="entry name" value="ATP_synth_b_bprime"/>
    <property type="match status" value="1"/>
</dbReference>
<dbReference type="InterPro" id="IPR002146">
    <property type="entry name" value="ATP_synth_b/b'su_bac/chlpt"/>
</dbReference>
<dbReference type="PANTHER" id="PTHR34264">
    <property type="entry name" value="ATP SYNTHASE SUBUNIT B, CHLOROPLASTIC"/>
    <property type="match status" value="1"/>
</dbReference>
<dbReference type="PANTHER" id="PTHR34264:SF3">
    <property type="entry name" value="ATP SYNTHASE SUBUNIT B, CHLOROPLASTIC"/>
    <property type="match status" value="1"/>
</dbReference>
<dbReference type="Pfam" id="PF00430">
    <property type="entry name" value="ATP-synt_B"/>
    <property type="match status" value="1"/>
</dbReference>
<accession>A4GGB1</accession>
<proteinExistence type="inferred from homology"/>
<gene>
    <name evidence="1" type="primary">atpF</name>
</gene>
<keyword id="KW-0066">ATP synthesis</keyword>
<keyword id="KW-0138">CF(0)</keyword>
<keyword id="KW-0150">Chloroplast</keyword>
<keyword id="KW-0375">Hydrogen ion transport</keyword>
<keyword id="KW-0406">Ion transport</keyword>
<keyword id="KW-0472">Membrane</keyword>
<keyword id="KW-0934">Plastid</keyword>
<keyword id="KW-0793">Thylakoid</keyword>
<keyword id="KW-0812">Transmembrane</keyword>
<keyword id="KW-1133">Transmembrane helix</keyword>
<keyword id="KW-0813">Transport</keyword>
<sequence>MKNITDSFLCLGSWPSAGSFVFNTDILATNPINLSVVLGVLVFFGKGVLSDLLDNRKQKIWRTIQNSEELQEEAIEQLEKAQARLRKVETEADRFRVNGYSEIKREKLNLIHSIYTTLEQLENYKNEAIDFEQQRVINQVRQRVLQQALQGALGTLNSCLNNELHLRTVSANIGMFGTMKEKNN</sequence>
<feature type="chain" id="PRO_0000368969" description="ATP synthase subunit b, chloroplastic">
    <location>
        <begin position="1"/>
        <end position="184"/>
    </location>
</feature>
<feature type="transmembrane region" description="Helical" evidence="1">
    <location>
        <begin position="27"/>
        <end position="49"/>
    </location>
</feature>
<organism>
    <name type="scientific">Phaseolus vulgaris</name>
    <name type="common">Kidney bean</name>
    <name type="synonym">French bean</name>
    <dbReference type="NCBI Taxonomy" id="3885"/>
    <lineage>
        <taxon>Eukaryota</taxon>
        <taxon>Viridiplantae</taxon>
        <taxon>Streptophyta</taxon>
        <taxon>Embryophyta</taxon>
        <taxon>Tracheophyta</taxon>
        <taxon>Spermatophyta</taxon>
        <taxon>Magnoliopsida</taxon>
        <taxon>eudicotyledons</taxon>
        <taxon>Gunneridae</taxon>
        <taxon>Pentapetalae</taxon>
        <taxon>rosids</taxon>
        <taxon>fabids</taxon>
        <taxon>Fabales</taxon>
        <taxon>Fabaceae</taxon>
        <taxon>Papilionoideae</taxon>
        <taxon>50 kb inversion clade</taxon>
        <taxon>NPAAA clade</taxon>
        <taxon>indigoferoid/millettioid clade</taxon>
        <taxon>Phaseoleae</taxon>
        <taxon>Phaseolus</taxon>
    </lineage>
</organism>
<name>ATPF_PHAVU</name>